<comment type="function">
    <text evidence="1">DNA-dependent RNA polymerase catalyzes the transcription of DNA into RNA using the four ribonucleoside triphosphates as substrates.</text>
</comment>
<comment type="catalytic activity">
    <reaction evidence="1">
        <text>RNA(n) + a ribonucleoside 5'-triphosphate = RNA(n+1) + diphosphate</text>
        <dbReference type="Rhea" id="RHEA:21248"/>
        <dbReference type="Rhea" id="RHEA-COMP:14527"/>
        <dbReference type="Rhea" id="RHEA-COMP:17342"/>
        <dbReference type="ChEBI" id="CHEBI:33019"/>
        <dbReference type="ChEBI" id="CHEBI:61557"/>
        <dbReference type="ChEBI" id="CHEBI:140395"/>
        <dbReference type="EC" id="2.7.7.6"/>
    </reaction>
</comment>
<comment type="subunit">
    <text evidence="1">Homodimer. The RNAP catalytic core consists of 2 alpha, 1 beta, 1 beta' and 1 omega subunit. When a sigma factor is associated with the core the holoenzyme is formed, which can initiate transcription.</text>
</comment>
<comment type="domain">
    <text evidence="1">The N-terminal domain is essential for RNAP assembly and basal transcription, whereas the C-terminal domain is involved in interaction with transcriptional regulators and with upstream promoter elements.</text>
</comment>
<comment type="similarity">
    <text evidence="1">Belongs to the RNA polymerase alpha chain family.</text>
</comment>
<protein>
    <recommendedName>
        <fullName evidence="1">DNA-directed RNA polymerase subunit alpha</fullName>
        <shortName evidence="1">RNAP subunit alpha</shortName>
        <ecNumber evidence="1">2.7.7.6</ecNumber>
    </recommendedName>
    <alternativeName>
        <fullName evidence="1">RNA polymerase subunit alpha</fullName>
    </alternativeName>
    <alternativeName>
        <fullName evidence="1">Transcriptase subunit alpha</fullName>
    </alternativeName>
</protein>
<name>RPOA_RICCN</name>
<proteinExistence type="inferred from homology"/>
<organism>
    <name type="scientific">Rickettsia conorii (strain ATCC VR-613 / Malish 7)</name>
    <dbReference type="NCBI Taxonomy" id="272944"/>
    <lineage>
        <taxon>Bacteria</taxon>
        <taxon>Pseudomonadati</taxon>
        <taxon>Pseudomonadota</taxon>
        <taxon>Alphaproteobacteria</taxon>
        <taxon>Rickettsiales</taxon>
        <taxon>Rickettsiaceae</taxon>
        <taxon>Rickettsieae</taxon>
        <taxon>Rickettsia</taxon>
        <taxon>spotted fever group</taxon>
    </lineage>
</organism>
<feature type="chain" id="PRO_0000175368" description="DNA-directed RNA polymerase subunit alpha">
    <location>
        <begin position="1"/>
        <end position="340"/>
    </location>
</feature>
<feature type="region of interest" description="Alpha N-terminal domain (alpha-NTD)" evidence="1">
    <location>
        <begin position="1"/>
        <end position="236"/>
    </location>
</feature>
<feature type="region of interest" description="Alpha C-terminal domain (alpha-CTD)" evidence="1">
    <location>
        <begin position="251"/>
        <end position="340"/>
    </location>
</feature>
<dbReference type="EC" id="2.7.7.6" evidence="1"/>
<dbReference type="EMBL" id="AE006914">
    <property type="protein sequence ID" value="AAL03520.1"/>
    <property type="molecule type" value="Genomic_DNA"/>
</dbReference>
<dbReference type="PIR" id="F97822">
    <property type="entry name" value="F97822"/>
</dbReference>
<dbReference type="RefSeq" id="WP_010977575.1">
    <property type="nucleotide sequence ID" value="NC_003103.1"/>
</dbReference>
<dbReference type="SMR" id="Q92GZ0"/>
<dbReference type="GeneID" id="928124"/>
<dbReference type="KEGG" id="rco:RC0982"/>
<dbReference type="PATRIC" id="fig|272944.4.peg.1122"/>
<dbReference type="HOGENOM" id="CLU_053084_0_0_5"/>
<dbReference type="Proteomes" id="UP000000816">
    <property type="component" value="Chromosome"/>
</dbReference>
<dbReference type="GO" id="GO:0005737">
    <property type="term" value="C:cytoplasm"/>
    <property type="evidence" value="ECO:0007669"/>
    <property type="project" value="UniProtKB-ARBA"/>
</dbReference>
<dbReference type="GO" id="GO:0000428">
    <property type="term" value="C:DNA-directed RNA polymerase complex"/>
    <property type="evidence" value="ECO:0007669"/>
    <property type="project" value="UniProtKB-KW"/>
</dbReference>
<dbReference type="GO" id="GO:0003677">
    <property type="term" value="F:DNA binding"/>
    <property type="evidence" value="ECO:0007669"/>
    <property type="project" value="UniProtKB-UniRule"/>
</dbReference>
<dbReference type="GO" id="GO:0003899">
    <property type="term" value="F:DNA-directed RNA polymerase activity"/>
    <property type="evidence" value="ECO:0007669"/>
    <property type="project" value="UniProtKB-UniRule"/>
</dbReference>
<dbReference type="GO" id="GO:0046983">
    <property type="term" value="F:protein dimerization activity"/>
    <property type="evidence" value="ECO:0007669"/>
    <property type="project" value="InterPro"/>
</dbReference>
<dbReference type="GO" id="GO:0006351">
    <property type="term" value="P:DNA-templated transcription"/>
    <property type="evidence" value="ECO:0007669"/>
    <property type="project" value="UniProtKB-UniRule"/>
</dbReference>
<dbReference type="CDD" id="cd06928">
    <property type="entry name" value="RNAP_alpha_NTD"/>
    <property type="match status" value="1"/>
</dbReference>
<dbReference type="FunFam" id="1.10.150.20:FF:000001">
    <property type="entry name" value="DNA-directed RNA polymerase subunit alpha"/>
    <property type="match status" value="1"/>
</dbReference>
<dbReference type="FunFam" id="2.170.120.12:FF:000001">
    <property type="entry name" value="DNA-directed RNA polymerase subunit alpha"/>
    <property type="match status" value="1"/>
</dbReference>
<dbReference type="Gene3D" id="1.10.150.20">
    <property type="entry name" value="5' to 3' exonuclease, C-terminal subdomain"/>
    <property type="match status" value="1"/>
</dbReference>
<dbReference type="Gene3D" id="2.170.120.12">
    <property type="entry name" value="DNA-directed RNA polymerase, insert domain"/>
    <property type="match status" value="1"/>
</dbReference>
<dbReference type="Gene3D" id="3.30.1360.10">
    <property type="entry name" value="RNA polymerase, RBP11-like subunit"/>
    <property type="match status" value="1"/>
</dbReference>
<dbReference type="HAMAP" id="MF_00059">
    <property type="entry name" value="RNApol_bact_RpoA"/>
    <property type="match status" value="1"/>
</dbReference>
<dbReference type="InterPro" id="IPR011262">
    <property type="entry name" value="DNA-dir_RNA_pol_insert"/>
</dbReference>
<dbReference type="InterPro" id="IPR011263">
    <property type="entry name" value="DNA-dir_RNA_pol_RpoA/D/Rpb3"/>
</dbReference>
<dbReference type="InterPro" id="IPR011773">
    <property type="entry name" value="DNA-dir_RpoA"/>
</dbReference>
<dbReference type="InterPro" id="IPR036603">
    <property type="entry name" value="RBP11-like"/>
</dbReference>
<dbReference type="InterPro" id="IPR011260">
    <property type="entry name" value="RNAP_asu_C"/>
</dbReference>
<dbReference type="InterPro" id="IPR036643">
    <property type="entry name" value="RNApol_insert_sf"/>
</dbReference>
<dbReference type="NCBIfam" id="NF003513">
    <property type="entry name" value="PRK05182.1-2"/>
    <property type="match status" value="1"/>
</dbReference>
<dbReference type="NCBIfam" id="NF003519">
    <property type="entry name" value="PRK05182.2-5"/>
    <property type="match status" value="1"/>
</dbReference>
<dbReference type="NCBIfam" id="TIGR02027">
    <property type="entry name" value="rpoA"/>
    <property type="match status" value="1"/>
</dbReference>
<dbReference type="Pfam" id="PF01000">
    <property type="entry name" value="RNA_pol_A_bac"/>
    <property type="match status" value="1"/>
</dbReference>
<dbReference type="Pfam" id="PF03118">
    <property type="entry name" value="RNA_pol_A_CTD"/>
    <property type="match status" value="1"/>
</dbReference>
<dbReference type="Pfam" id="PF01193">
    <property type="entry name" value="RNA_pol_L"/>
    <property type="match status" value="1"/>
</dbReference>
<dbReference type="SMART" id="SM00662">
    <property type="entry name" value="RPOLD"/>
    <property type="match status" value="1"/>
</dbReference>
<dbReference type="SUPFAM" id="SSF47789">
    <property type="entry name" value="C-terminal domain of RNA polymerase alpha subunit"/>
    <property type="match status" value="1"/>
</dbReference>
<dbReference type="SUPFAM" id="SSF56553">
    <property type="entry name" value="Insert subdomain of RNA polymerase alpha subunit"/>
    <property type="match status" value="1"/>
</dbReference>
<dbReference type="SUPFAM" id="SSF55257">
    <property type="entry name" value="RBP11-like subunits of RNA polymerase"/>
    <property type="match status" value="1"/>
</dbReference>
<sequence>MLSLSKNWNTLIKPNKVAYENFPETNNKAKIVVEPLERGFGLTLGNAMRRVLLSSLQGAAITSIKIPAIEHEFSSIPGVKEDVSEVILNIKGIEVKMHVAEKRIMKLKATGPCVVTAGMIETGHDVEILNPDHVICDLAKDKQLEMELTCKVGKGYVLSTNSYEDNLPIGEIAIDALFNPVKSVTYKVENTRVGQVTDYDKLIMFVETNGDVLPEMAVGLAARILQEQLQLFISFEEQEEDKQVKTDTLPFSPYLLKRVDELELSVRSANCLKNDNIIYIGDLVKRTESDMLRTPNFGRKSLNEIKEILAKFNLRFGMDVPDWPPENIQELSKRYEDSYN</sequence>
<reference key="1">
    <citation type="journal article" date="2001" name="Science">
        <title>Mechanisms of evolution in Rickettsia conorii and R. prowazekii.</title>
        <authorList>
            <person name="Ogata H."/>
            <person name="Audic S."/>
            <person name="Renesto-Audiffren P."/>
            <person name="Fournier P.-E."/>
            <person name="Barbe V."/>
            <person name="Samson D."/>
            <person name="Roux V."/>
            <person name="Cossart P."/>
            <person name="Weissenbach J."/>
            <person name="Claverie J.-M."/>
            <person name="Raoult D."/>
        </authorList>
    </citation>
    <scope>NUCLEOTIDE SEQUENCE [LARGE SCALE GENOMIC DNA]</scope>
    <source>
        <strain>ATCC VR-613 / Malish 7</strain>
    </source>
</reference>
<evidence type="ECO:0000255" key="1">
    <source>
        <dbReference type="HAMAP-Rule" id="MF_00059"/>
    </source>
</evidence>
<accession>Q92GZ0</accession>
<gene>
    <name evidence="1" type="primary">rpoA</name>
    <name type="ordered locus">RC0982</name>
</gene>
<keyword id="KW-0240">DNA-directed RNA polymerase</keyword>
<keyword id="KW-0548">Nucleotidyltransferase</keyword>
<keyword id="KW-0804">Transcription</keyword>
<keyword id="KW-0808">Transferase</keyword>